<sequence>MKHLIPLIVMASVVLAVYADRGYGGGRRGGGYGGGGYGGGGYGGGGGGYGGGVGGGRGGGGGLGGGRGGGGGVIDGKDDVGLGGGGYGGGLGGGQGGGGGLGGGQGGGGGLGGGRGGGGYGGGGGGYGGGKYGGGKYGGK</sequence>
<keyword id="KW-0027">Amidation</keyword>
<keyword id="KW-0044">Antibiotic</keyword>
<keyword id="KW-0929">Antimicrobial</keyword>
<keyword id="KW-0903">Direct protein sequencing</keyword>
<keyword id="KW-0391">Immunity</keyword>
<keyword id="KW-0399">Innate immunity</keyword>
<keyword id="KW-0964">Secreted</keyword>
<keyword id="KW-0732">Signal</keyword>
<dbReference type="GO" id="GO:0005576">
    <property type="term" value="C:extracellular region"/>
    <property type="evidence" value="ECO:0000314"/>
    <property type="project" value="UniProtKB"/>
</dbReference>
<dbReference type="GO" id="GO:0050829">
    <property type="term" value="P:defense response to Gram-negative bacterium"/>
    <property type="evidence" value="ECO:0000314"/>
    <property type="project" value="UniProtKB"/>
</dbReference>
<dbReference type="GO" id="GO:0050830">
    <property type="term" value="P:defense response to Gram-positive bacterium"/>
    <property type="evidence" value="ECO:0000314"/>
    <property type="project" value="UniProtKB"/>
</dbReference>
<dbReference type="GO" id="GO:0045087">
    <property type="term" value="P:innate immune response"/>
    <property type="evidence" value="ECO:0007669"/>
    <property type="project" value="UniProtKB-KW"/>
</dbReference>
<dbReference type="PRINTS" id="PR01228">
    <property type="entry name" value="EGGSHELL"/>
</dbReference>
<proteinExistence type="evidence at protein level"/>
<protein>
    <recommendedName>
        <fullName evidence="4">Ctenidin-1</fullName>
    </recommendedName>
    <alternativeName>
        <fullName evidence="4">Ctenidin-2</fullName>
    </alternativeName>
</protein>
<organism>
    <name type="scientific">Cupiennius salei</name>
    <name type="common">American wandering spider</name>
    <dbReference type="NCBI Taxonomy" id="6928"/>
    <lineage>
        <taxon>Eukaryota</taxon>
        <taxon>Metazoa</taxon>
        <taxon>Ecdysozoa</taxon>
        <taxon>Arthropoda</taxon>
        <taxon>Chelicerata</taxon>
        <taxon>Arachnida</taxon>
        <taxon>Araneae</taxon>
        <taxon>Araneomorphae</taxon>
        <taxon>Entelegynae</taxon>
        <taxon>Lycosoidea</taxon>
        <taxon>Ctenidae</taxon>
        <taxon>Cupiennius</taxon>
    </lineage>
</organism>
<reference evidence="5" key="1">
    <citation type="journal article" date="2010" name="Cell. Mol. Life Sci.">
        <title>Ctenidins: antimicrobial glycine-rich peptides from the hemocytes of the spider Cupiennius salei.</title>
        <authorList>
            <person name="Baumann T."/>
            <person name="Kampfer U."/>
            <person name="Schurch S."/>
            <person name="Schaller J."/>
            <person name="Largiader C."/>
            <person name="Nentwig W."/>
            <person name="Kuhn-Nentwig L."/>
        </authorList>
    </citation>
    <scope>NUCLEOTIDE SEQUENCE [GENOMIC DNA / MRNA]</scope>
    <scope>PROTEIN SEQUENCE OF 20-39</scope>
    <scope>FUNCTION</scope>
    <scope>TISSUE SPECIFICITY</scope>
    <scope>MASS SPECTROMETRY</scope>
    <scope>AMIDATION AT GLY-138</scope>
    <source>
        <tissue evidence="3">Hemocyte</tissue>
    </source>
</reference>
<name>CTEN1_CUPSA</name>
<comment type="function">
    <text evidence="3">Antimicrobial protein with bacteriostatic activity against the Gram-negative bacterium E.coli, and very weak activity against the Gram-positive bacterium S.aureus. Lacks activity against the yeast C.albicans.</text>
</comment>
<comment type="subcellular location">
    <subcellularLocation>
        <location evidence="1">Secreted</location>
    </subcellularLocation>
</comment>
<comment type="tissue specificity">
    <text evidence="3">Expressed in hemocytes (at protein level).</text>
</comment>
<comment type="mass spectrometry"/>
<comment type="miscellaneous">
    <text evidence="5">The peptide Ctenidin-2 corresponds to the shorter peptide indicated as conflict in the feature table.</text>
</comment>
<comment type="similarity">
    <text evidence="5">Belongs to the glycine-rich peptide family.</text>
</comment>
<accession>P86798</accession>
<accession>P86801</accession>
<evidence type="ECO:0000250" key="1">
    <source>
        <dbReference type="UniProtKB" id="Q8I948"/>
    </source>
</evidence>
<evidence type="ECO:0000255" key="2"/>
<evidence type="ECO:0000269" key="3">
    <source>
    </source>
</evidence>
<evidence type="ECO:0000303" key="4">
    <source>
    </source>
</evidence>
<evidence type="ECO:0000305" key="5"/>
<feature type="signal peptide" evidence="2 3">
    <location>
        <begin position="1"/>
        <end position="19"/>
    </location>
</feature>
<feature type="chain" id="PRO_0000401097" description="Ctenidin-1" evidence="3">
    <location>
        <begin position="20"/>
        <end position="138"/>
    </location>
</feature>
<feature type="modified residue" description="Glycine amide" evidence="3">
    <location>
        <position position="138"/>
    </location>
</feature>
<feature type="sequence conflict" description="In Ref. 1; AA sequence." evidence="5" ref="1">
    <location>
        <begin position="105"/>
        <end position="114"/>
    </location>
</feature>